<dbReference type="EMBL" id="AM236080">
    <property type="protein sequence ID" value="CAK09749.1"/>
    <property type="molecule type" value="Genomic_DNA"/>
</dbReference>
<dbReference type="RefSeq" id="WP_011653655.1">
    <property type="nucleotide sequence ID" value="NC_008380.1"/>
</dbReference>
<dbReference type="SMR" id="Q1MBD4"/>
<dbReference type="EnsemblBacteria" id="CAK09749">
    <property type="protein sequence ID" value="CAK09749"/>
    <property type="gene ID" value="RL4260"/>
</dbReference>
<dbReference type="KEGG" id="rle:RL4260"/>
<dbReference type="eggNOG" id="COG1780">
    <property type="taxonomic scope" value="Bacteria"/>
</dbReference>
<dbReference type="HOGENOM" id="CLU_114845_0_0_5"/>
<dbReference type="Proteomes" id="UP000006575">
    <property type="component" value="Chromosome"/>
</dbReference>
<dbReference type="GO" id="GO:0010181">
    <property type="term" value="F:FMN binding"/>
    <property type="evidence" value="ECO:0007669"/>
    <property type="project" value="InterPro"/>
</dbReference>
<dbReference type="GO" id="GO:0036211">
    <property type="term" value="P:protein modification process"/>
    <property type="evidence" value="ECO:0007669"/>
    <property type="project" value="InterPro"/>
</dbReference>
<dbReference type="Gene3D" id="3.40.50.360">
    <property type="match status" value="1"/>
</dbReference>
<dbReference type="HAMAP" id="MF_00128">
    <property type="entry name" value="NrdI"/>
    <property type="match status" value="1"/>
</dbReference>
<dbReference type="InterPro" id="IPR029039">
    <property type="entry name" value="Flavoprotein-like_sf"/>
</dbReference>
<dbReference type="InterPro" id="IPR020852">
    <property type="entry name" value="RNR_Ib_NrdI_bac"/>
</dbReference>
<dbReference type="InterPro" id="IPR004465">
    <property type="entry name" value="RNR_NrdI"/>
</dbReference>
<dbReference type="NCBIfam" id="TIGR00333">
    <property type="entry name" value="nrdI"/>
    <property type="match status" value="1"/>
</dbReference>
<dbReference type="PANTHER" id="PTHR37297">
    <property type="entry name" value="PROTEIN NRDI"/>
    <property type="match status" value="1"/>
</dbReference>
<dbReference type="PANTHER" id="PTHR37297:SF1">
    <property type="entry name" value="PROTEIN NRDI"/>
    <property type="match status" value="1"/>
</dbReference>
<dbReference type="Pfam" id="PF07972">
    <property type="entry name" value="Flavodoxin_NdrI"/>
    <property type="match status" value="1"/>
</dbReference>
<dbReference type="PIRSF" id="PIRSF005087">
    <property type="entry name" value="NrdI"/>
    <property type="match status" value="1"/>
</dbReference>
<dbReference type="SUPFAM" id="SSF52218">
    <property type="entry name" value="Flavoproteins"/>
    <property type="match status" value="1"/>
</dbReference>
<proteinExistence type="inferred from homology"/>
<name>NRDI_RHIJ3</name>
<evidence type="ECO:0000255" key="1">
    <source>
        <dbReference type="HAMAP-Rule" id="MF_00128"/>
    </source>
</evidence>
<reference key="1">
    <citation type="journal article" date="2006" name="Genome Biol.">
        <title>The genome of Rhizobium leguminosarum has recognizable core and accessory components.</title>
        <authorList>
            <person name="Young J.P.W."/>
            <person name="Crossman L.C."/>
            <person name="Johnston A.W.B."/>
            <person name="Thomson N.R."/>
            <person name="Ghazoui Z.F."/>
            <person name="Hull K.H."/>
            <person name="Wexler M."/>
            <person name="Curson A.R.J."/>
            <person name="Todd J.D."/>
            <person name="Poole P.S."/>
            <person name="Mauchline T.H."/>
            <person name="East A.K."/>
            <person name="Quail M.A."/>
            <person name="Churcher C."/>
            <person name="Arrowsmith C."/>
            <person name="Cherevach I."/>
            <person name="Chillingworth T."/>
            <person name="Clarke K."/>
            <person name="Cronin A."/>
            <person name="Davis P."/>
            <person name="Fraser A."/>
            <person name="Hance Z."/>
            <person name="Hauser H."/>
            <person name="Jagels K."/>
            <person name="Moule S."/>
            <person name="Mungall K."/>
            <person name="Norbertczak H."/>
            <person name="Rabbinowitsch E."/>
            <person name="Sanders M."/>
            <person name="Simmonds M."/>
            <person name="Whitehead S."/>
            <person name="Parkhill J."/>
        </authorList>
    </citation>
    <scope>NUCLEOTIDE SEQUENCE [LARGE SCALE GENOMIC DNA]</scope>
    <source>
        <strain>DSM 114642 / LMG 32736 / 3841</strain>
    </source>
</reference>
<sequence length="135" mass="14834">MGLIVYYSSRSENTHRFVAKLGLRAARIPPSGAAGAFHIREPFVLIVPTYSGDGGKGAVPKQVIRFLNDAENRGHIRGVIAAGNSNFGETYGLAGDVVSQKCQVPYLYRFELLGTEADVANVKHGMERFWTREHL</sequence>
<comment type="function">
    <text evidence="1">Probably involved in ribonucleotide reductase function.</text>
</comment>
<comment type="similarity">
    <text evidence="1">Belongs to the NrdI family.</text>
</comment>
<accession>Q1MBD4</accession>
<gene>
    <name evidence="1" type="primary">nrdI</name>
    <name type="ordered locus">RL4260</name>
</gene>
<feature type="chain" id="PRO_1000016519" description="Protein NrdI">
    <location>
        <begin position="1"/>
        <end position="135"/>
    </location>
</feature>
<organism>
    <name type="scientific">Rhizobium johnstonii (strain DSM 114642 / LMG 32736 / 3841)</name>
    <name type="common">Rhizobium leguminosarum bv. viciae</name>
    <dbReference type="NCBI Taxonomy" id="216596"/>
    <lineage>
        <taxon>Bacteria</taxon>
        <taxon>Pseudomonadati</taxon>
        <taxon>Pseudomonadota</taxon>
        <taxon>Alphaproteobacteria</taxon>
        <taxon>Hyphomicrobiales</taxon>
        <taxon>Rhizobiaceae</taxon>
        <taxon>Rhizobium/Agrobacterium group</taxon>
        <taxon>Rhizobium</taxon>
        <taxon>Rhizobium johnstonii</taxon>
    </lineage>
</organism>
<protein>
    <recommendedName>
        <fullName evidence="1">Protein NrdI</fullName>
    </recommendedName>
</protein>